<reference key="1">
    <citation type="journal article" date="2001" name="DNA Seq.">
        <title>Complete cDNA and deduced amino acid sequence of the chaperonin containing T-complex polypeptide 1 (CCT) delta subunit from Aedes triseriatus mosquitoes.</title>
        <authorList>
            <person name="Blitvich B.J."/>
            <person name="Rayms-Keller A."/>
            <person name="Blair C.D."/>
            <person name="Beaty B.J."/>
        </authorList>
    </citation>
    <scope>NUCLEOTIDE SEQUENCE [MRNA]</scope>
</reference>
<comment type="function">
    <text evidence="1">Molecular chaperone; assists the folding of proteins upon ATP hydrolysis. Known to play a role, in vitro, in the folding of actin and tubulin (By similarity).</text>
</comment>
<comment type="subunit">
    <text evidence="1">Heterooligomeric complex of about 850 to 900 kDa that forms two stacked rings, 12 to 16 nm in diameter.</text>
</comment>
<comment type="subcellular location">
    <subcellularLocation>
        <location>Cytoplasm</location>
    </subcellularLocation>
</comment>
<comment type="similarity">
    <text evidence="3">Belongs to the TCP-1 chaperonin family.</text>
</comment>
<proteinExistence type="evidence at transcript level"/>
<evidence type="ECO:0000250" key="1"/>
<evidence type="ECO:0000256" key="2">
    <source>
        <dbReference type="SAM" id="MobiDB-lite"/>
    </source>
</evidence>
<evidence type="ECO:0000305" key="3"/>
<name>TCPD_OCHTR</name>
<feature type="chain" id="PRO_0000128338" description="T-complex protein 1 subunit delta">
    <location>
        <begin position="1"/>
        <end position="533"/>
    </location>
</feature>
<feature type="region of interest" description="Disordered" evidence="2">
    <location>
        <begin position="1"/>
        <end position="24"/>
    </location>
</feature>
<dbReference type="EMBL" id="AF271209">
    <property type="protein sequence ID" value="AAF87577.1"/>
    <property type="molecule type" value="mRNA"/>
</dbReference>
<dbReference type="SMR" id="Q9NB32"/>
<dbReference type="BRENDA" id="5.6.1.7">
    <property type="organism ID" value="7612"/>
</dbReference>
<dbReference type="GO" id="GO:0005737">
    <property type="term" value="C:cytoplasm"/>
    <property type="evidence" value="ECO:0007669"/>
    <property type="project" value="UniProtKB-SubCell"/>
</dbReference>
<dbReference type="GO" id="GO:0005524">
    <property type="term" value="F:ATP binding"/>
    <property type="evidence" value="ECO:0007669"/>
    <property type="project" value="UniProtKB-KW"/>
</dbReference>
<dbReference type="GO" id="GO:0016887">
    <property type="term" value="F:ATP hydrolysis activity"/>
    <property type="evidence" value="ECO:0007669"/>
    <property type="project" value="InterPro"/>
</dbReference>
<dbReference type="GO" id="GO:0140662">
    <property type="term" value="F:ATP-dependent protein folding chaperone"/>
    <property type="evidence" value="ECO:0007669"/>
    <property type="project" value="InterPro"/>
</dbReference>
<dbReference type="GO" id="GO:0051082">
    <property type="term" value="F:unfolded protein binding"/>
    <property type="evidence" value="ECO:0007669"/>
    <property type="project" value="InterPro"/>
</dbReference>
<dbReference type="CDD" id="cd03338">
    <property type="entry name" value="TCP1_delta"/>
    <property type="match status" value="1"/>
</dbReference>
<dbReference type="FunFam" id="3.50.7.10:FF:000010">
    <property type="entry name" value="T-complex protein 1 subunit delta"/>
    <property type="match status" value="1"/>
</dbReference>
<dbReference type="Gene3D" id="3.50.7.10">
    <property type="entry name" value="GroEL"/>
    <property type="match status" value="1"/>
</dbReference>
<dbReference type="Gene3D" id="1.10.560.10">
    <property type="entry name" value="GroEL-like equatorial domain"/>
    <property type="match status" value="1"/>
</dbReference>
<dbReference type="Gene3D" id="3.30.260.10">
    <property type="entry name" value="TCP-1-like chaperonin intermediate domain"/>
    <property type="match status" value="1"/>
</dbReference>
<dbReference type="InterPro" id="IPR012717">
    <property type="entry name" value="Chap_CCT_delta"/>
</dbReference>
<dbReference type="InterPro" id="IPR017998">
    <property type="entry name" value="Chaperone_TCP-1"/>
</dbReference>
<dbReference type="InterPro" id="IPR002194">
    <property type="entry name" value="Chaperonin_TCP-1_CS"/>
</dbReference>
<dbReference type="InterPro" id="IPR002423">
    <property type="entry name" value="Cpn60/GroEL/TCP-1"/>
</dbReference>
<dbReference type="InterPro" id="IPR027409">
    <property type="entry name" value="GroEL-like_apical_dom_sf"/>
</dbReference>
<dbReference type="InterPro" id="IPR027413">
    <property type="entry name" value="GROEL-like_equatorial_sf"/>
</dbReference>
<dbReference type="InterPro" id="IPR027410">
    <property type="entry name" value="TCP-1-like_intermed_sf"/>
</dbReference>
<dbReference type="InterPro" id="IPR053374">
    <property type="entry name" value="TCP-1_chaperonin"/>
</dbReference>
<dbReference type="InterPro" id="IPR054827">
    <property type="entry name" value="thermosome_alpha"/>
</dbReference>
<dbReference type="NCBIfam" id="TIGR02342">
    <property type="entry name" value="chap_CCT_delta"/>
    <property type="match status" value="1"/>
</dbReference>
<dbReference type="NCBIfam" id="NF041082">
    <property type="entry name" value="thermosome_alpha"/>
    <property type="match status" value="1"/>
</dbReference>
<dbReference type="NCBIfam" id="NF041083">
    <property type="entry name" value="thermosome_beta"/>
    <property type="match status" value="1"/>
</dbReference>
<dbReference type="PANTHER" id="PTHR11353">
    <property type="entry name" value="CHAPERONIN"/>
    <property type="match status" value="1"/>
</dbReference>
<dbReference type="Pfam" id="PF00118">
    <property type="entry name" value="Cpn60_TCP1"/>
    <property type="match status" value="1"/>
</dbReference>
<dbReference type="PRINTS" id="PR00304">
    <property type="entry name" value="TCOMPLEXTCP1"/>
</dbReference>
<dbReference type="SUPFAM" id="SSF52029">
    <property type="entry name" value="GroEL apical domain-like"/>
    <property type="match status" value="1"/>
</dbReference>
<dbReference type="SUPFAM" id="SSF48592">
    <property type="entry name" value="GroEL equatorial domain-like"/>
    <property type="match status" value="1"/>
</dbReference>
<dbReference type="SUPFAM" id="SSF54849">
    <property type="entry name" value="GroEL-intermediate domain like"/>
    <property type="match status" value="1"/>
</dbReference>
<dbReference type="PROSITE" id="PS00750">
    <property type="entry name" value="TCP1_1"/>
    <property type="match status" value="1"/>
</dbReference>
<dbReference type="PROSITE" id="PS00751">
    <property type="entry name" value="TCP1_2"/>
    <property type="match status" value="1"/>
</dbReference>
<dbReference type="PROSITE" id="PS00995">
    <property type="entry name" value="TCP1_3"/>
    <property type="match status" value="1"/>
</dbReference>
<accession>Q9NB32</accession>
<organism>
    <name type="scientific">Ochlerotatus triseriatus</name>
    <name type="common">Eastern treehole mosquito</name>
    <name type="synonym">Aedes triseriatus</name>
    <dbReference type="NCBI Taxonomy" id="7162"/>
    <lineage>
        <taxon>Eukaryota</taxon>
        <taxon>Metazoa</taxon>
        <taxon>Ecdysozoa</taxon>
        <taxon>Arthropoda</taxon>
        <taxon>Hexapoda</taxon>
        <taxon>Insecta</taxon>
        <taxon>Pterygota</taxon>
        <taxon>Neoptera</taxon>
        <taxon>Endopterygota</taxon>
        <taxon>Diptera</taxon>
        <taxon>Nematocera</taxon>
        <taxon>Culicoidea</taxon>
        <taxon>Culicidae</taxon>
        <taxon>Culicinae</taxon>
        <taxon>Aedini</taxon>
        <taxon>Ochlerotatus</taxon>
        <taxon>Protomacleaya</taxon>
    </lineage>
</organism>
<keyword id="KW-0067">ATP-binding</keyword>
<keyword id="KW-0143">Chaperone</keyword>
<keyword id="KW-0963">Cytoplasm</keyword>
<keyword id="KW-0547">Nucleotide-binding</keyword>
<sequence length="533" mass="57180">MVVKPAARGMKPQGQAYKDKSKPADIRQSNINAAKAVSDAIRTSLGPRGMDKMIQAANGEVTITNDGATILKQMNVIHPAAKMLVELSRAQDVEAGDGTTSVVVVAGALLKAVEKLLQMGIHPTAISDAFQKCSAKAVDILTEMSTPIELTDRESLVKSASTSLNSKVVSQHSSQLAPIAVEAVLKVTEAGHESGVDLKNVKIIRSLGGTIDDTELVDGLVFTQRSCGVNGPKRVEKAKIGLIQFCISAPKTDMDHSVIVSDYAAMDRVLKEERAYILNIVKQIKKAGCNVLLVQKSILRDAVSDLAMHFLDKIKVMVVKDIEHEDIEFVCKTLNCRPIASLDHFLPEHLVNADLVEEVSSGSSKFVKVTGIQNMGQTVSIVVRGSNKLVLEEAERSLHDALCVVRCLVKKRAQIAGGGAPEIEMAIQLAAHAQTLEGVDAYCFRAFANALEVIPSTLAENAGLNPIATVTELRNRHAQGEKNAGINVRKGAITDILAENVVQPLLVSTSSITLASETVRSILKIDDIINTMQ</sequence>
<protein>
    <recommendedName>
        <fullName>T-complex protein 1 subunit delta</fullName>
        <shortName>TCP-1-delta</shortName>
    </recommendedName>
    <alternativeName>
        <fullName>CCT-delta</fullName>
    </alternativeName>
</protein>